<reference key="1">
    <citation type="journal article" date="2009" name="Genome Res.">
        <title>Comparative genomic analyses of the human fungal pathogens Coccidioides and their relatives.</title>
        <authorList>
            <person name="Sharpton T.J."/>
            <person name="Stajich J.E."/>
            <person name="Rounsley S.D."/>
            <person name="Gardner M.J."/>
            <person name="Wortman J.R."/>
            <person name="Jordar V.S."/>
            <person name="Maiti R."/>
            <person name="Kodira C.D."/>
            <person name="Neafsey D.E."/>
            <person name="Zeng Q."/>
            <person name="Hung C.-Y."/>
            <person name="McMahan C."/>
            <person name="Muszewska A."/>
            <person name="Grynberg M."/>
            <person name="Mandel M.A."/>
            <person name="Kellner E.M."/>
            <person name="Barker B.M."/>
            <person name="Galgiani J.N."/>
            <person name="Orbach M.J."/>
            <person name="Kirkland T.N."/>
            <person name="Cole G.T."/>
            <person name="Henn M.R."/>
            <person name="Birren B.W."/>
            <person name="Taylor J.W."/>
        </authorList>
    </citation>
    <scope>NUCLEOTIDE SEQUENCE [LARGE SCALE GENOMIC DNA]</scope>
    <source>
        <strain>NAm1 / WU24</strain>
    </source>
</reference>
<keyword id="KW-0072">Autophagy</keyword>
<keyword id="KW-0967">Endosome</keyword>
<keyword id="KW-0472">Membrane</keyword>
<keyword id="KW-0653">Protein transport</keyword>
<keyword id="KW-1185">Reference proteome</keyword>
<keyword id="KW-0677">Repeat</keyword>
<keyword id="KW-0813">Transport</keyword>
<keyword id="KW-0926">Vacuole</keyword>
<keyword id="KW-0853">WD repeat</keyword>
<evidence type="ECO:0000250" key="1"/>
<evidence type="ECO:0000250" key="2">
    <source>
        <dbReference type="UniProtKB" id="P43601"/>
    </source>
</evidence>
<evidence type="ECO:0000256" key="3">
    <source>
        <dbReference type="SAM" id="MobiDB-lite"/>
    </source>
</evidence>
<evidence type="ECO:0000305" key="4"/>
<organism>
    <name type="scientific">Ajellomyces capsulatus (strain NAm1 / WU24)</name>
    <name type="common">Darling's disease fungus</name>
    <name type="synonym">Histoplasma capsulatum</name>
    <dbReference type="NCBI Taxonomy" id="2059318"/>
    <lineage>
        <taxon>Eukaryota</taxon>
        <taxon>Fungi</taxon>
        <taxon>Dikarya</taxon>
        <taxon>Ascomycota</taxon>
        <taxon>Pezizomycotina</taxon>
        <taxon>Eurotiomycetes</taxon>
        <taxon>Eurotiomycetidae</taxon>
        <taxon>Onygenales</taxon>
        <taxon>Ajellomycetaceae</taxon>
        <taxon>Histoplasma</taxon>
    </lineage>
</organism>
<dbReference type="EMBL" id="CH476655">
    <property type="protein sequence ID" value="EDN02969.1"/>
    <property type="molecule type" value="Genomic_DNA"/>
</dbReference>
<dbReference type="SMR" id="A6QTX7"/>
<dbReference type="STRING" id="339724.A6QTX7"/>
<dbReference type="KEGG" id="aje:HCAG_00833"/>
<dbReference type="VEuPathDB" id="FungiDB:HCAG_00833"/>
<dbReference type="HOGENOM" id="CLU_025895_5_2_1"/>
<dbReference type="OMA" id="NIAILEM"/>
<dbReference type="OrthoDB" id="5944at299071"/>
<dbReference type="Proteomes" id="UP000009297">
    <property type="component" value="Unassembled WGS sequence"/>
</dbReference>
<dbReference type="GO" id="GO:0010008">
    <property type="term" value="C:endosome membrane"/>
    <property type="evidence" value="ECO:0007669"/>
    <property type="project" value="UniProtKB-SubCell"/>
</dbReference>
<dbReference type="GO" id="GO:0034045">
    <property type="term" value="C:phagophore assembly site membrane"/>
    <property type="evidence" value="ECO:0007669"/>
    <property type="project" value="UniProtKB-SubCell"/>
</dbReference>
<dbReference type="GO" id="GO:0005774">
    <property type="term" value="C:vacuolar membrane"/>
    <property type="evidence" value="ECO:0007669"/>
    <property type="project" value="UniProtKB-SubCell"/>
</dbReference>
<dbReference type="GO" id="GO:0006914">
    <property type="term" value="P:autophagy"/>
    <property type="evidence" value="ECO:0007669"/>
    <property type="project" value="UniProtKB-KW"/>
</dbReference>
<dbReference type="GO" id="GO:0015031">
    <property type="term" value="P:protein transport"/>
    <property type="evidence" value="ECO:0007669"/>
    <property type="project" value="UniProtKB-KW"/>
</dbReference>
<dbReference type="Gene3D" id="2.130.10.10">
    <property type="entry name" value="YVTN repeat-like/Quinoprotein amine dehydrogenase"/>
    <property type="match status" value="1"/>
</dbReference>
<dbReference type="InterPro" id="IPR048720">
    <property type="entry name" value="PROPPIN"/>
</dbReference>
<dbReference type="InterPro" id="IPR015943">
    <property type="entry name" value="WD40/YVTN_repeat-like_dom_sf"/>
</dbReference>
<dbReference type="InterPro" id="IPR036322">
    <property type="entry name" value="WD40_repeat_dom_sf"/>
</dbReference>
<dbReference type="InterPro" id="IPR001680">
    <property type="entry name" value="WD40_rpt"/>
</dbReference>
<dbReference type="PANTHER" id="PTHR11227">
    <property type="entry name" value="WD-REPEAT PROTEIN INTERACTING WITH PHOSPHOINOSIDES WIPI -RELATED"/>
    <property type="match status" value="1"/>
</dbReference>
<dbReference type="Pfam" id="PF21032">
    <property type="entry name" value="PROPPIN"/>
    <property type="match status" value="2"/>
</dbReference>
<dbReference type="SMART" id="SM00320">
    <property type="entry name" value="WD40"/>
    <property type="match status" value="2"/>
</dbReference>
<dbReference type="SUPFAM" id="SSF50978">
    <property type="entry name" value="WD40 repeat-like"/>
    <property type="match status" value="1"/>
</dbReference>
<name>ATG18_AJECN</name>
<feature type="chain" id="PRO_0000317994" description="Autophagy-related protein 18">
    <location>
        <begin position="1"/>
        <end position="400"/>
    </location>
</feature>
<feature type="repeat" description="WD 1">
    <location>
        <begin position="163"/>
        <end position="203"/>
    </location>
</feature>
<feature type="repeat" description="WD 2">
    <location>
        <begin position="208"/>
        <end position="247"/>
    </location>
</feature>
<feature type="repeat" description="WD 3">
    <location>
        <begin position="295"/>
        <end position="341"/>
    </location>
</feature>
<feature type="repeat" description="WD 4">
    <location>
        <begin position="353"/>
        <end position="393"/>
    </location>
</feature>
<feature type="region of interest" description="Disordered" evidence="3">
    <location>
        <begin position="241"/>
        <end position="296"/>
    </location>
</feature>
<feature type="short sequence motif" description="L/FRRG motif" evidence="2">
    <location>
        <begin position="204"/>
        <end position="208"/>
    </location>
</feature>
<feature type="compositionally biased region" description="Basic and acidic residues" evidence="3">
    <location>
        <begin position="256"/>
        <end position="268"/>
    </location>
</feature>
<feature type="compositionally biased region" description="Polar residues" evidence="3">
    <location>
        <begin position="270"/>
        <end position="284"/>
    </location>
</feature>
<protein>
    <recommendedName>
        <fullName>Autophagy-related protein 18</fullName>
    </recommendedName>
</protein>
<sequence>MAMNFVTFNQDYSYLAVGNIAILEMLFSTSLVALILSPRRLQITNTKRQSTICELTFPTTVLAVRLNRKRLVIVLEDQIYLYDIQTMKLLYTIETSPNPNAICALSPSSENCYLAYPLPQKAPPSSFTPPSHAPPSSAHISPTSGEVLIFDTLKLEAINVVEAHKSPLSCLAINTEGTLLATASDKGTIIRVFSVPDAQKLYQFRRGSMPSRIFSMSFNITSTLLCVSSATETIHIFKLGHQDPSEDLPTSPIGTDSRKTNSTPRERAFSQGSSTLSGGDNSPTDGDPSDISSRKHNGTLMGMIRRTSQNVGNSFAATVGGYLPKGVTEIWEPARDFAWIRLPKTAGYGGPGSNAGPVRSVVAMSSNTPQVMVVTSDGNFYVYNVDLSKGGEGTLTKQYS</sequence>
<gene>
    <name type="primary">ATG18</name>
    <name type="ORF">HCAG_00833</name>
</gene>
<comment type="function">
    <text evidence="1">The PI(3,5)P2 regulatory complex regulates both the synthesis and turnover of phosphatidylinositol 3,5-bisphosphate (PtdIns(3,5)P2). Necessary for proper vacuole morphology. Plays an important role in osmotically-induced vacuole fragmentation. Required for cytoplasm to vacuole transport (Cvt) vesicle formation, pexophagy and starvation-induced autophagy. Involved in correct ATG9 trafficking to the pre-autophagosomal structure. Might also be involved in premeiotic DNA replication (By similarity).</text>
</comment>
<comment type="subunit">
    <text evidence="1">Component of the PI(3,5)P2 regulatory complex.</text>
</comment>
<comment type="subcellular location">
    <subcellularLocation>
        <location evidence="1">Preautophagosomal structure membrane</location>
        <topology evidence="1">Peripheral membrane protein</topology>
    </subcellularLocation>
    <subcellularLocation>
        <location evidence="1">Vacuole membrane</location>
        <topology evidence="1">Peripheral membrane protein</topology>
    </subcellularLocation>
    <subcellularLocation>
        <location evidence="1">Endosome membrane</location>
        <topology evidence="1">Peripheral membrane protein</topology>
    </subcellularLocation>
</comment>
<comment type="domain">
    <text evidence="1">The N-terminus might form a beta-propeller domain involved in specific binding to phosphatidylinositol 3,5-bisphosphate (PIP2), leading to the association of the protein to the membrane.</text>
</comment>
<comment type="domain">
    <text evidence="2">The L/FRRG motif is essential for the cytoplasm to vacuole transport (Cvt) pathway, for the recruitment of ATG8 and ATG16 to the PAS in nutrient-rich medium, and for its recruitment to and dissociation from the PAS under starvation conditions.</text>
</comment>
<comment type="similarity">
    <text evidence="4">Belongs to the WD repeat PROPPIN family.</text>
</comment>
<proteinExistence type="inferred from homology"/>
<accession>A6QTX7</accession>